<reference key="1">
    <citation type="journal article" date="2011" name="Stand. Genomic Sci.">
        <title>Complete genome sequence of the halophilic and highly halotolerant Chromohalobacter salexigens type strain (1H11(T)).</title>
        <authorList>
            <person name="Copeland A."/>
            <person name="O'Connor K."/>
            <person name="Lucas S."/>
            <person name="Lapidus A."/>
            <person name="Berry K.W."/>
            <person name="Detter J.C."/>
            <person name="Del Rio T.G."/>
            <person name="Hammon N."/>
            <person name="Dalin E."/>
            <person name="Tice H."/>
            <person name="Pitluck S."/>
            <person name="Bruce D."/>
            <person name="Goodwin L."/>
            <person name="Han C."/>
            <person name="Tapia R."/>
            <person name="Saunders E."/>
            <person name="Schmutz J."/>
            <person name="Brettin T."/>
            <person name="Larimer F."/>
            <person name="Land M."/>
            <person name="Hauser L."/>
            <person name="Vargas C."/>
            <person name="Nieto J.J."/>
            <person name="Kyrpides N.C."/>
            <person name="Ivanova N."/>
            <person name="Goker M."/>
            <person name="Klenk H.P."/>
            <person name="Csonka L.N."/>
            <person name="Woyke T."/>
        </authorList>
    </citation>
    <scope>NUCLEOTIDE SEQUENCE [LARGE SCALE GENOMIC DNA]</scope>
    <source>
        <strain>ATCC BAA-138 / DSM 3043 / CIP 106854 / NCIMB 13768 / 1H11</strain>
    </source>
</reference>
<dbReference type="EC" id="1.7.1.13" evidence="1"/>
<dbReference type="EMBL" id="CP000285">
    <property type="protein sequence ID" value="ABE58708.1"/>
    <property type="molecule type" value="Genomic_DNA"/>
</dbReference>
<dbReference type="RefSeq" id="WP_011506654.1">
    <property type="nucleotide sequence ID" value="NC_007963.1"/>
</dbReference>
<dbReference type="SMR" id="Q1QXV0"/>
<dbReference type="STRING" id="290398.Csal_1353"/>
<dbReference type="GeneID" id="95334096"/>
<dbReference type="KEGG" id="csa:Csal_1353"/>
<dbReference type="eggNOG" id="COG0780">
    <property type="taxonomic scope" value="Bacteria"/>
</dbReference>
<dbReference type="eggNOG" id="COG2904">
    <property type="taxonomic scope" value="Bacteria"/>
</dbReference>
<dbReference type="HOGENOM" id="CLU_054738_0_0_6"/>
<dbReference type="OrthoDB" id="9789995at2"/>
<dbReference type="UniPathway" id="UPA00392"/>
<dbReference type="Proteomes" id="UP000000239">
    <property type="component" value="Chromosome"/>
</dbReference>
<dbReference type="GO" id="GO:0005737">
    <property type="term" value="C:cytoplasm"/>
    <property type="evidence" value="ECO:0007669"/>
    <property type="project" value="UniProtKB-SubCell"/>
</dbReference>
<dbReference type="GO" id="GO:0033739">
    <property type="term" value="F:preQ1 synthase activity"/>
    <property type="evidence" value="ECO:0007669"/>
    <property type="project" value="UniProtKB-UniRule"/>
</dbReference>
<dbReference type="GO" id="GO:0008616">
    <property type="term" value="P:queuosine biosynthetic process"/>
    <property type="evidence" value="ECO:0007669"/>
    <property type="project" value="UniProtKB-UniRule"/>
</dbReference>
<dbReference type="GO" id="GO:0006400">
    <property type="term" value="P:tRNA modification"/>
    <property type="evidence" value="ECO:0007669"/>
    <property type="project" value="UniProtKB-UniRule"/>
</dbReference>
<dbReference type="Gene3D" id="3.30.1130.10">
    <property type="match status" value="2"/>
</dbReference>
<dbReference type="HAMAP" id="MF_00817">
    <property type="entry name" value="QueF_type2"/>
    <property type="match status" value="1"/>
</dbReference>
<dbReference type="InterPro" id="IPR043133">
    <property type="entry name" value="GTP-CH-I_C/QueF"/>
</dbReference>
<dbReference type="InterPro" id="IPR050084">
    <property type="entry name" value="NADPH_dep_7-cyano-7-deazaG_red"/>
</dbReference>
<dbReference type="InterPro" id="IPR029500">
    <property type="entry name" value="QueF"/>
</dbReference>
<dbReference type="InterPro" id="IPR029139">
    <property type="entry name" value="QueF_N"/>
</dbReference>
<dbReference type="InterPro" id="IPR016428">
    <property type="entry name" value="QueF_type2"/>
</dbReference>
<dbReference type="NCBIfam" id="TIGR03138">
    <property type="entry name" value="QueF"/>
    <property type="match status" value="1"/>
</dbReference>
<dbReference type="PANTHER" id="PTHR34354">
    <property type="entry name" value="NADPH-DEPENDENT 7-CYANO-7-DEAZAGUANINE REDUCTASE"/>
    <property type="match status" value="1"/>
</dbReference>
<dbReference type="PANTHER" id="PTHR34354:SF1">
    <property type="entry name" value="NADPH-DEPENDENT 7-CYANO-7-DEAZAGUANINE REDUCTASE"/>
    <property type="match status" value="1"/>
</dbReference>
<dbReference type="Pfam" id="PF14489">
    <property type="entry name" value="QueF"/>
    <property type="match status" value="1"/>
</dbReference>
<dbReference type="Pfam" id="PF14819">
    <property type="entry name" value="QueF_N"/>
    <property type="match status" value="1"/>
</dbReference>
<dbReference type="PIRSF" id="PIRSF004750">
    <property type="entry name" value="Nitrile_oxidored_YqcD_prd"/>
    <property type="match status" value="1"/>
</dbReference>
<dbReference type="SUPFAM" id="SSF55620">
    <property type="entry name" value="Tetrahydrobiopterin biosynthesis enzymes-like"/>
    <property type="match status" value="1"/>
</dbReference>
<keyword id="KW-0963">Cytoplasm</keyword>
<keyword id="KW-0521">NADP</keyword>
<keyword id="KW-0560">Oxidoreductase</keyword>
<keyword id="KW-0671">Queuosine biosynthesis</keyword>
<keyword id="KW-1185">Reference proteome</keyword>
<evidence type="ECO:0000255" key="1">
    <source>
        <dbReference type="HAMAP-Rule" id="MF_00817"/>
    </source>
</evidence>
<protein>
    <recommendedName>
        <fullName evidence="1">NADPH-dependent 7-cyano-7-deazaguanine reductase</fullName>
        <ecNumber evidence="1">1.7.1.13</ecNumber>
    </recommendedName>
    <alternativeName>
        <fullName evidence="1">7-cyano-7-carbaguanine reductase</fullName>
    </alternativeName>
    <alternativeName>
        <fullName evidence="1">NADPH-dependent nitrile oxidoreductase</fullName>
    </alternativeName>
    <alternativeName>
        <fullName evidence="1">PreQ(0) reductase</fullName>
    </alternativeName>
</protein>
<comment type="function">
    <text evidence="1">Catalyzes the NADPH-dependent reduction of 7-cyano-7-deazaguanine (preQ0) to 7-aminomethyl-7-deazaguanine (preQ1).</text>
</comment>
<comment type="catalytic activity">
    <reaction evidence="1">
        <text>7-aminomethyl-7-carbaguanine + 2 NADP(+) = 7-cyano-7-deazaguanine + 2 NADPH + 3 H(+)</text>
        <dbReference type="Rhea" id="RHEA:13409"/>
        <dbReference type="ChEBI" id="CHEBI:15378"/>
        <dbReference type="ChEBI" id="CHEBI:45075"/>
        <dbReference type="ChEBI" id="CHEBI:57783"/>
        <dbReference type="ChEBI" id="CHEBI:58349"/>
        <dbReference type="ChEBI" id="CHEBI:58703"/>
        <dbReference type="EC" id="1.7.1.13"/>
    </reaction>
</comment>
<comment type="pathway">
    <text evidence="1">tRNA modification; tRNA-queuosine biosynthesis.</text>
</comment>
<comment type="subunit">
    <text evidence="1">Homodimer.</text>
</comment>
<comment type="subcellular location">
    <subcellularLocation>
        <location evidence="1">Cytoplasm</location>
    </subcellularLocation>
</comment>
<comment type="similarity">
    <text evidence="1">Belongs to the GTP cyclohydrolase I family. QueF type 2 subfamily.</text>
</comment>
<gene>
    <name evidence="1" type="primary">queF</name>
    <name type="ordered locus">Csal_1353</name>
</gene>
<organism>
    <name type="scientific">Chromohalobacter salexigens (strain ATCC BAA-138 / DSM 3043 / CIP 106854 / NCIMB 13768 / 1H11)</name>
    <dbReference type="NCBI Taxonomy" id="290398"/>
    <lineage>
        <taxon>Bacteria</taxon>
        <taxon>Pseudomonadati</taxon>
        <taxon>Pseudomonadota</taxon>
        <taxon>Gammaproteobacteria</taxon>
        <taxon>Oceanospirillales</taxon>
        <taxon>Halomonadaceae</taxon>
        <taxon>Chromohalobacter</taxon>
    </lineage>
</organism>
<sequence length="277" mass="31386">MSERDKTLEHAPLGRESAYPEHYDAGLLFPIPRQANRAPLGLDDAALPFEGEDEWHAFELSWLDAKGKPIVAVARFRLPADSPSLIESKSWKLYLNSFNQTRFDRREAVIDTLERDLAQAAGASVAVALFGVEDDALMPRALPGECLDDLDVSIEYYTPTPGLLEVGEEIVEETLHSHLLKSNCPVTGQPDWGSVLIRYRGPRLERDALLKYLISYRQHQDFHEHCVEHLFVDLMARARPERLLVMARYVRRGGLDISPWRGTPGERPPTPLRLARQ</sequence>
<accession>Q1QXV0</accession>
<name>QUEF_CHRSD</name>
<feature type="chain" id="PRO_0000247707" description="NADPH-dependent 7-cyano-7-deazaguanine reductase">
    <location>
        <begin position="1"/>
        <end position="277"/>
    </location>
</feature>
<feature type="active site" description="Thioimide intermediate" evidence="1">
    <location>
        <position position="184"/>
    </location>
</feature>
<feature type="active site" description="Proton donor" evidence="1">
    <location>
        <position position="191"/>
    </location>
</feature>
<feature type="binding site" evidence="1">
    <location>
        <begin position="86"/>
        <end position="88"/>
    </location>
    <ligand>
        <name>substrate</name>
    </ligand>
</feature>
<feature type="binding site" evidence="1">
    <location>
        <begin position="88"/>
        <end position="89"/>
    </location>
    <ligand>
        <name>NADPH</name>
        <dbReference type="ChEBI" id="CHEBI:57783"/>
    </ligand>
</feature>
<feature type="binding site" evidence="1">
    <location>
        <begin position="223"/>
        <end position="224"/>
    </location>
    <ligand>
        <name>substrate</name>
    </ligand>
</feature>
<feature type="binding site" evidence="1">
    <location>
        <begin position="252"/>
        <end position="253"/>
    </location>
    <ligand>
        <name>NADPH</name>
        <dbReference type="ChEBI" id="CHEBI:57783"/>
    </ligand>
</feature>
<proteinExistence type="inferred from homology"/>